<gene>
    <name type="primary">RPS29</name>
    <name type="ordered locus">ECU04_0125i</name>
</gene>
<feature type="chain" id="PRO_0000131029" description="Small ribosomal subunit protein uS14">
    <location>
        <begin position="1"/>
        <end position="55"/>
    </location>
</feature>
<feature type="region of interest" description="Disordered" evidence="2">
    <location>
        <begin position="1"/>
        <end position="20"/>
    </location>
</feature>
<feature type="binding site" evidence="1">
    <location>
        <position position="22"/>
    </location>
    <ligand>
        <name>Zn(2+)</name>
        <dbReference type="ChEBI" id="CHEBI:29105"/>
    </ligand>
</feature>
<feature type="binding site" evidence="1">
    <location>
        <position position="25"/>
    </location>
    <ligand>
        <name>Zn(2+)</name>
        <dbReference type="ChEBI" id="CHEBI:29105"/>
    </ligand>
</feature>
<feature type="binding site" evidence="1">
    <location>
        <position position="38"/>
    </location>
    <ligand>
        <name>Zn(2+)</name>
        <dbReference type="ChEBI" id="CHEBI:29105"/>
    </ligand>
</feature>
<feature type="binding site" evidence="1">
    <location>
        <position position="41"/>
    </location>
    <ligand>
        <name>Zn(2+)</name>
        <dbReference type="ChEBI" id="CHEBI:29105"/>
    </ligand>
</feature>
<organism>
    <name type="scientific">Encephalitozoon cuniculi (strain GB-M1)</name>
    <name type="common">Microsporidian parasite</name>
    <dbReference type="NCBI Taxonomy" id="284813"/>
    <lineage>
        <taxon>Eukaryota</taxon>
        <taxon>Fungi</taxon>
        <taxon>Fungi incertae sedis</taxon>
        <taxon>Microsporidia</taxon>
        <taxon>Unikaryonidae</taxon>
        <taxon>Encephalitozoon</taxon>
    </lineage>
</organism>
<name>RS29_ENCCU</name>
<keyword id="KW-0479">Metal-binding</keyword>
<keyword id="KW-1185">Reference proteome</keyword>
<keyword id="KW-0687">Ribonucleoprotein</keyword>
<keyword id="KW-0689">Ribosomal protein</keyword>
<keyword id="KW-0862">Zinc</keyword>
<dbReference type="EMBL" id="AL590444">
    <property type="protein sequence ID" value="CAD25200.1"/>
    <property type="molecule type" value="Genomic_DNA"/>
</dbReference>
<dbReference type="RefSeq" id="NP_584696.1">
    <property type="nucleotide sequence ID" value="NM_001041046.1"/>
</dbReference>
<dbReference type="SMR" id="Q8SS73"/>
<dbReference type="FunCoup" id="Q8SS73">
    <property type="interactions" value="134"/>
</dbReference>
<dbReference type="STRING" id="284813.Q8SS73"/>
<dbReference type="GeneID" id="858844"/>
<dbReference type="KEGG" id="ecu:ECU04_0125i"/>
<dbReference type="VEuPathDB" id="MicrosporidiaDB:ECU04_0125i"/>
<dbReference type="HOGENOM" id="CLU_177289_2_0_1"/>
<dbReference type="InParanoid" id="Q8SS73"/>
<dbReference type="OrthoDB" id="10252683at2759"/>
<dbReference type="Proteomes" id="UP000000819">
    <property type="component" value="Chromosome IV"/>
</dbReference>
<dbReference type="GO" id="GO:0022627">
    <property type="term" value="C:cytosolic small ribosomal subunit"/>
    <property type="evidence" value="ECO:0007669"/>
    <property type="project" value="TreeGrafter"/>
</dbReference>
<dbReference type="GO" id="GO:0003735">
    <property type="term" value="F:structural constituent of ribosome"/>
    <property type="evidence" value="ECO:0007669"/>
    <property type="project" value="InterPro"/>
</dbReference>
<dbReference type="GO" id="GO:0008270">
    <property type="term" value="F:zinc ion binding"/>
    <property type="evidence" value="ECO:0007669"/>
    <property type="project" value="InterPro"/>
</dbReference>
<dbReference type="GO" id="GO:0002181">
    <property type="term" value="P:cytoplasmic translation"/>
    <property type="evidence" value="ECO:0007669"/>
    <property type="project" value="TreeGrafter"/>
</dbReference>
<dbReference type="Gene3D" id="4.10.830.10">
    <property type="entry name" value="30s Ribosomal Protein S14, Chain N"/>
    <property type="match status" value="1"/>
</dbReference>
<dbReference type="InterPro" id="IPR001209">
    <property type="entry name" value="Ribosomal_uS14"/>
</dbReference>
<dbReference type="InterPro" id="IPR018271">
    <property type="entry name" value="Ribosomal_uS14_CS"/>
</dbReference>
<dbReference type="InterPro" id="IPR039744">
    <property type="entry name" value="RIbosomal_uS14_euk_arc"/>
</dbReference>
<dbReference type="InterPro" id="IPR043140">
    <property type="entry name" value="Ribosomal_uS14_sf"/>
</dbReference>
<dbReference type="PANTHER" id="PTHR12010">
    <property type="entry name" value="40S RIBOSOMAL PROTEIN S29"/>
    <property type="match status" value="1"/>
</dbReference>
<dbReference type="PANTHER" id="PTHR12010:SF2">
    <property type="entry name" value="40S RIBOSOMAL PROTEIN S29"/>
    <property type="match status" value="1"/>
</dbReference>
<dbReference type="Pfam" id="PF00253">
    <property type="entry name" value="Ribosomal_S14"/>
    <property type="match status" value="1"/>
</dbReference>
<dbReference type="PROSITE" id="PS00527">
    <property type="entry name" value="RIBOSOMAL_S14"/>
    <property type="match status" value="1"/>
</dbReference>
<comment type="cofactor">
    <cofactor evidence="3">
        <name>Zn(2+)</name>
        <dbReference type="ChEBI" id="CHEBI:29105"/>
    </cofactor>
    <text evidence="3">Binds 1 zinc ion per subunit.</text>
</comment>
<comment type="similarity">
    <text evidence="3">Belongs to the universal ribosomal protein uS14 family.</text>
</comment>
<evidence type="ECO:0000255" key="1"/>
<evidence type="ECO:0000256" key="2">
    <source>
        <dbReference type="SAM" id="MobiDB-lite"/>
    </source>
</evidence>
<evidence type="ECO:0000305" key="3"/>
<proteinExistence type="inferred from homology"/>
<protein>
    <recommendedName>
        <fullName evidence="3">Small ribosomal subunit protein uS14</fullName>
    </recommendedName>
    <alternativeName>
        <fullName>40S ribosomal protein S29</fullName>
    </alternativeName>
</protein>
<accession>Q8SS73</accession>
<reference key="1">
    <citation type="journal article" date="2001" name="Nature">
        <title>Genome sequence and gene compaction of the eukaryote parasite Encephalitozoon cuniculi.</title>
        <authorList>
            <person name="Katinka M.D."/>
            <person name="Duprat S."/>
            <person name="Cornillot E."/>
            <person name="Metenier G."/>
            <person name="Thomarat F."/>
            <person name="Prensier G."/>
            <person name="Barbe V."/>
            <person name="Peyretaillade E."/>
            <person name="Brottier P."/>
            <person name="Wincker P."/>
            <person name="Delbac F."/>
            <person name="El Alaoui H."/>
            <person name="Peyret P."/>
            <person name="Saurin W."/>
            <person name="Gouy M."/>
            <person name="Weissenbach J."/>
            <person name="Vivares C.P."/>
        </authorList>
    </citation>
    <scope>NUCLEOTIDE SEQUENCE [LARGE SCALE GENOMIC DNA]</scope>
    <source>
        <strain>GB-M1</strain>
    </source>
</reference>
<sequence>MSFEPSGPHSHRKPFGKGSRSCVSCYTFRGIIRKLMMCRRCFREYAGDIGFAIYD</sequence>